<gene>
    <name type="primary">PDZK1</name>
    <name type="synonym">CAP70</name>
    <name type="synonym">NHERF3</name>
    <name type="synonym">PDZD1</name>
</gene>
<protein>
    <recommendedName>
        <fullName>Na(+)/H(+) exchange regulatory cofactor NHE-RF3</fullName>
        <shortName>NHERF-3</shortName>
    </recommendedName>
    <alternativeName>
        <fullName>CFTR-associated protein of 70 kDa</fullName>
    </alternativeName>
    <alternativeName>
        <fullName>Na(+)/H(+) exchanger regulatory factor 3</fullName>
    </alternativeName>
    <alternativeName>
        <fullName>Na/Pi cotransporter C-terminal-associated protein 1</fullName>
        <shortName>NaPi-Cap1</shortName>
    </alternativeName>
    <alternativeName>
        <fullName>PDZ domain-containing protein 1</fullName>
    </alternativeName>
    <alternativeName>
        <fullName>Sodium-hydrogen exchanger regulatory factor 3</fullName>
    </alternativeName>
</protein>
<name>NHRF3_HUMAN</name>
<sequence length="519" mass="57129">MTSTFNPRECKLSKQEGQNYGFFLRIEKDTEGHLVRVVEKCSPAEKAGLQDGDRVLRINGVFVDKEEHMQVVDLVRKSGNSVTLLVLDGDSYEKAVKTRVDLKELGQSQKEQGLSDNILSPVMNGGVQTWTQPRLCYLVKEGGSYGFSLKTVQGKKGVYMTDITPQGVAMRAGVLADDHLIEVNGENVEDASHEEVVEKVKKSGSRVMFLLVDKETDKRHVEQKIQFKRETASLKLLPHQPRIVEMKKGSNGYGFYLRAGSEQKGQIIKDIDSGSPAEEAGLKNNDLVVAVNGESVETLDHDSVVEMIRKGGDQTSLLVVDKETDNMYRLAHFSPFLYYQSQELPNGSVKEAPAPTPTSLEVSSPPDTTEEVDHKPKLCRLAKGENGYGFHLNAIRGLPGSFIKEVQKGGPADLAGLEDEDVIIEVNGVNVLDEPYEKVVDRIQSSGKNVTLLVCGKKAYDYFQAKKIPIVSSLADPLDTPPDSKEGIVVESNHDSHMAKERAHSTASHSSSNSEDTEM</sequence>
<proteinExistence type="evidence at protein level"/>
<dbReference type="EMBL" id="AF012281">
    <property type="protein sequence ID" value="AAC12264.1"/>
    <property type="molecule type" value="mRNA"/>
</dbReference>
<dbReference type="EMBL" id="AK298269">
    <property type="protein sequence ID" value="BAG60531.1"/>
    <property type="molecule type" value="mRNA"/>
</dbReference>
<dbReference type="EMBL" id="AL390725">
    <property type="protein sequence ID" value="CAI13715.1"/>
    <property type="molecule type" value="Genomic_DNA"/>
</dbReference>
<dbReference type="EMBL" id="AL390725">
    <property type="protein sequence ID" value="CAI13716.1"/>
    <property type="molecule type" value="Genomic_DNA"/>
</dbReference>
<dbReference type="EMBL" id="BC006496">
    <property type="protein sequence ID" value="AAH06496.1"/>
    <property type="molecule type" value="mRNA"/>
</dbReference>
<dbReference type="EMBL" id="BC006518">
    <property type="protein sequence ID" value="AAH06518.1"/>
    <property type="molecule type" value="mRNA"/>
</dbReference>
<dbReference type="CCDS" id="CCDS72859.1">
    <molecule id="Q5T2W1-2"/>
</dbReference>
<dbReference type="CCDS" id="CCDS72860.1">
    <molecule id="Q5T2W1-1"/>
</dbReference>
<dbReference type="RefSeq" id="NP_001188254.1">
    <molecule id="Q5T2W1-1"/>
    <property type="nucleotide sequence ID" value="NM_001201325.2"/>
</dbReference>
<dbReference type="RefSeq" id="NP_001188255.1">
    <molecule id="Q5T2W1-2"/>
    <property type="nucleotide sequence ID" value="NM_001201326.1"/>
</dbReference>
<dbReference type="RefSeq" id="NP_002605.2">
    <molecule id="Q5T2W1-1"/>
    <property type="nucleotide sequence ID" value="NM_002614.4"/>
</dbReference>
<dbReference type="RefSeq" id="XP_016856953.1">
    <property type="nucleotide sequence ID" value="XM_017001464.1"/>
</dbReference>
<dbReference type="RefSeq" id="XP_047278485.1">
    <molecule id="Q5T2W1-1"/>
    <property type="nucleotide sequence ID" value="XM_047422529.1"/>
</dbReference>
<dbReference type="PDB" id="2EEI">
    <property type="method" value="NMR"/>
    <property type="chains" value="A=132-224"/>
</dbReference>
<dbReference type="PDB" id="2EEJ">
    <property type="method" value="NMR"/>
    <property type="chains" value="A=376-458"/>
</dbReference>
<dbReference type="PDB" id="2VSP">
    <property type="method" value="X-ray"/>
    <property type="resolution" value="2.60 A"/>
    <property type="chains" value="A/B/C/D=375-459"/>
</dbReference>
<dbReference type="PDB" id="3TMH">
    <property type="method" value="X-ray"/>
    <property type="resolution" value="3.80 A"/>
    <property type="chains" value="A/E/I=375-459"/>
</dbReference>
<dbReference type="PDB" id="4Q2P">
    <property type="method" value="X-ray"/>
    <property type="resolution" value="2.05 A"/>
    <property type="chains" value="A/B/C=132-215"/>
</dbReference>
<dbReference type="PDB" id="6EZI">
    <property type="method" value="X-ray"/>
    <property type="resolution" value="1.50 A"/>
    <property type="chains" value="A=374-460"/>
</dbReference>
<dbReference type="PDBsum" id="2EEI"/>
<dbReference type="PDBsum" id="2EEJ"/>
<dbReference type="PDBsum" id="2VSP"/>
<dbReference type="PDBsum" id="3TMH"/>
<dbReference type="PDBsum" id="4Q2P"/>
<dbReference type="PDBsum" id="6EZI"/>
<dbReference type="SMR" id="Q5T2W1"/>
<dbReference type="BioGRID" id="111200">
    <property type="interactions" value="65"/>
</dbReference>
<dbReference type="CORUM" id="Q5T2W1"/>
<dbReference type="FunCoup" id="Q5T2W1">
    <property type="interactions" value="148"/>
</dbReference>
<dbReference type="IntAct" id="Q5T2W1">
    <property type="interactions" value="53"/>
</dbReference>
<dbReference type="MINT" id="Q5T2W1"/>
<dbReference type="STRING" id="9606.ENSP00000342143"/>
<dbReference type="GlyGen" id="Q5T2W1">
    <property type="glycosylation" value="1 site"/>
</dbReference>
<dbReference type="iPTMnet" id="Q5T2W1"/>
<dbReference type="PhosphoSitePlus" id="Q5T2W1"/>
<dbReference type="BioMuta" id="PDZK1"/>
<dbReference type="DMDM" id="73621372"/>
<dbReference type="jPOST" id="Q5T2W1"/>
<dbReference type="MassIVE" id="Q5T2W1"/>
<dbReference type="PaxDb" id="9606-ENSP00000394485"/>
<dbReference type="PeptideAtlas" id="Q5T2W1"/>
<dbReference type="ProteomicsDB" id="18326"/>
<dbReference type="ProteomicsDB" id="64362">
    <molecule id="Q5T2W1-1"/>
</dbReference>
<dbReference type="Antibodypedia" id="1599">
    <property type="antibodies" value="424 antibodies from 32 providers"/>
</dbReference>
<dbReference type="DNASU" id="5174"/>
<dbReference type="Ensembl" id="ENST00000344770.6">
    <molecule id="Q5T2W1-1"/>
    <property type="protein sequence ID" value="ENSP00000342143.2"/>
    <property type="gene ID" value="ENSG00000174827.14"/>
</dbReference>
<dbReference type="Ensembl" id="ENST00000417171.6">
    <molecule id="Q5T2W1-1"/>
    <property type="protein sequence ID" value="ENSP00000394485.1"/>
    <property type="gene ID" value="ENSG00000174827.14"/>
</dbReference>
<dbReference type="Ensembl" id="ENST00000451928.6">
    <molecule id="Q5T2W1-2"/>
    <property type="protein sequence ID" value="ENSP00000403422.2"/>
    <property type="gene ID" value="ENSG00000174827.14"/>
</dbReference>
<dbReference type="GeneID" id="5174"/>
<dbReference type="KEGG" id="hsa:5174"/>
<dbReference type="MANE-Select" id="ENST00000417171.6">
    <property type="protein sequence ID" value="ENSP00000394485.1"/>
    <property type="RefSeq nucleotide sequence ID" value="NM_001201325.2"/>
    <property type="RefSeq protein sequence ID" value="NP_001188254.1"/>
</dbReference>
<dbReference type="UCSC" id="uc001eoo.3">
    <molecule id="Q5T2W1-1"/>
    <property type="organism name" value="human"/>
</dbReference>
<dbReference type="AGR" id="HGNC:8821"/>
<dbReference type="CTD" id="5174"/>
<dbReference type="DisGeNET" id="5174"/>
<dbReference type="GeneCards" id="PDZK1"/>
<dbReference type="HGNC" id="HGNC:8821">
    <property type="gene designation" value="PDZK1"/>
</dbReference>
<dbReference type="HPA" id="ENSG00000174827">
    <property type="expression patterns" value="Tissue enriched (kidney)"/>
</dbReference>
<dbReference type="MIM" id="603831">
    <property type="type" value="gene"/>
</dbReference>
<dbReference type="neXtProt" id="NX_Q5T2W1"/>
<dbReference type="OpenTargets" id="ENSG00000174827"/>
<dbReference type="PharmGKB" id="PA33165"/>
<dbReference type="VEuPathDB" id="HostDB:ENSG00000174827"/>
<dbReference type="eggNOG" id="KOG3528">
    <property type="taxonomic scope" value="Eukaryota"/>
</dbReference>
<dbReference type="GeneTree" id="ENSGT00950000182849"/>
<dbReference type="HOGENOM" id="CLU_031712_1_0_1"/>
<dbReference type="InParanoid" id="Q5T2W1"/>
<dbReference type="OMA" id="ISPCLYY"/>
<dbReference type="OrthoDB" id="10009200at2759"/>
<dbReference type="PAN-GO" id="Q5T2W1">
    <property type="GO annotations" value="3 GO annotations based on evolutionary models"/>
</dbReference>
<dbReference type="PhylomeDB" id="Q5T2W1"/>
<dbReference type="TreeFam" id="TF350449"/>
<dbReference type="PathwayCommons" id="Q5T2W1"/>
<dbReference type="SignaLink" id="Q5T2W1"/>
<dbReference type="SIGNOR" id="Q5T2W1"/>
<dbReference type="BioGRID-ORCS" id="5174">
    <property type="hits" value="39 hits in 1144 CRISPR screens"/>
</dbReference>
<dbReference type="ChiTaRS" id="PDZK1">
    <property type="organism name" value="human"/>
</dbReference>
<dbReference type="EvolutionaryTrace" id="Q5T2W1"/>
<dbReference type="GeneWiki" id="PDZK1"/>
<dbReference type="GenomeRNAi" id="5174"/>
<dbReference type="Pharos" id="Q5T2W1">
    <property type="development level" value="Tbio"/>
</dbReference>
<dbReference type="PRO" id="PR:Q5T2W1"/>
<dbReference type="Proteomes" id="UP000005640">
    <property type="component" value="Chromosome 1"/>
</dbReference>
<dbReference type="RNAct" id="Q5T2W1">
    <property type="molecule type" value="protein"/>
</dbReference>
<dbReference type="Bgee" id="ENSG00000174827">
    <property type="expression patterns" value="Expressed in adult mammalian kidney and 99 other cell types or tissues"/>
</dbReference>
<dbReference type="ExpressionAtlas" id="Q5T2W1">
    <property type="expression patterns" value="baseline and differential"/>
</dbReference>
<dbReference type="GO" id="GO:0016324">
    <property type="term" value="C:apical plasma membrane"/>
    <property type="evidence" value="ECO:0000318"/>
    <property type="project" value="GO_Central"/>
</dbReference>
<dbReference type="GO" id="GO:0005903">
    <property type="term" value="C:brush border"/>
    <property type="evidence" value="ECO:0000314"/>
    <property type="project" value="UniProtKB"/>
</dbReference>
<dbReference type="GO" id="GO:0031526">
    <property type="term" value="C:brush border membrane"/>
    <property type="evidence" value="ECO:0000250"/>
    <property type="project" value="UniProtKB"/>
</dbReference>
<dbReference type="GO" id="GO:0070062">
    <property type="term" value="C:extracellular exosome"/>
    <property type="evidence" value="ECO:0007005"/>
    <property type="project" value="UniProtKB"/>
</dbReference>
<dbReference type="GO" id="GO:0031528">
    <property type="term" value="C:microvillus membrane"/>
    <property type="evidence" value="ECO:0007669"/>
    <property type="project" value="Ensembl"/>
</dbReference>
<dbReference type="GO" id="GO:0005886">
    <property type="term" value="C:plasma membrane"/>
    <property type="evidence" value="ECO:0000314"/>
    <property type="project" value="ARUK-UCL"/>
</dbReference>
<dbReference type="GO" id="GO:0030165">
    <property type="term" value="F:PDZ domain binding"/>
    <property type="evidence" value="ECO:0000353"/>
    <property type="project" value="UniProtKB"/>
</dbReference>
<dbReference type="GO" id="GO:0044877">
    <property type="term" value="F:protein-containing complex binding"/>
    <property type="evidence" value="ECO:0007669"/>
    <property type="project" value="Ensembl"/>
</dbReference>
<dbReference type="GO" id="GO:0043495">
    <property type="term" value="F:protein-membrane adaptor activity"/>
    <property type="evidence" value="ECO:0000318"/>
    <property type="project" value="GO_Central"/>
</dbReference>
<dbReference type="GO" id="GO:0005124">
    <property type="term" value="F:scavenger receptor binding"/>
    <property type="evidence" value="ECO:0007669"/>
    <property type="project" value="Ensembl"/>
</dbReference>
<dbReference type="GO" id="GO:0005102">
    <property type="term" value="F:signaling receptor binding"/>
    <property type="evidence" value="ECO:0000318"/>
    <property type="project" value="GO_Central"/>
</dbReference>
<dbReference type="GO" id="GO:0141109">
    <property type="term" value="F:transporter activator activity"/>
    <property type="evidence" value="ECO:0000314"/>
    <property type="project" value="BHF-UCL"/>
</dbReference>
<dbReference type="GO" id="GO:1902603">
    <property type="term" value="P:carnitine transmembrane transport"/>
    <property type="evidence" value="ECO:0000314"/>
    <property type="project" value="BHF-UCL"/>
</dbReference>
<dbReference type="GO" id="GO:1905477">
    <property type="term" value="P:positive regulation of protein localization to membrane"/>
    <property type="evidence" value="ECO:0000315"/>
    <property type="project" value="ARUK-UCL"/>
</dbReference>
<dbReference type="GO" id="GO:0090314">
    <property type="term" value="P:positive regulation of protein targeting to membrane"/>
    <property type="evidence" value="ECO:0000250"/>
    <property type="project" value="UniProtKB"/>
</dbReference>
<dbReference type="GO" id="GO:0072659">
    <property type="term" value="P:protein localization to plasma membrane"/>
    <property type="evidence" value="ECO:0000318"/>
    <property type="project" value="GO_Central"/>
</dbReference>
<dbReference type="GO" id="GO:0044070">
    <property type="term" value="P:regulation of monoatomic anion transport"/>
    <property type="evidence" value="ECO:0000250"/>
    <property type="project" value="UniProtKB"/>
</dbReference>
<dbReference type="GO" id="GO:1990961">
    <property type="term" value="P:xenobiotic detoxification by transmembrane export across the plasma membrane"/>
    <property type="evidence" value="ECO:0000303"/>
    <property type="project" value="UniProtKB"/>
</dbReference>
<dbReference type="CDD" id="cd06768">
    <property type="entry name" value="PDZ_NHERF-like"/>
    <property type="match status" value="4"/>
</dbReference>
<dbReference type="FunFam" id="2.30.42.10:FF:000187">
    <property type="entry name" value="Na(+)/H(+) exchange regulatory cofactor NHE-RF3"/>
    <property type="match status" value="1"/>
</dbReference>
<dbReference type="FunFam" id="2.30.42.10:FF:000211">
    <property type="entry name" value="Na(+)/H(+) exchange regulatory cofactor NHE-RF3"/>
    <property type="match status" value="1"/>
</dbReference>
<dbReference type="FunFam" id="2.30.42.10:FF:000166">
    <property type="entry name" value="Na(+)/H(+) exchange regulatory cofactor NHE-RF3 isoform X1"/>
    <property type="match status" value="1"/>
</dbReference>
<dbReference type="FunFam" id="2.30.42.10:FF:000123">
    <property type="entry name" value="Na(+)/H(+) exchange regulatory cofactor NHE-RF4"/>
    <property type="match status" value="1"/>
</dbReference>
<dbReference type="Gene3D" id="2.30.42.10">
    <property type="match status" value="4"/>
</dbReference>
<dbReference type="InterPro" id="IPR051067">
    <property type="entry name" value="NHER"/>
</dbReference>
<dbReference type="InterPro" id="IPR001478">
    <property type="entry name" value="PDZ"/>
</dbReference>
<dbReference type="InterPro" id="IPR036034">
    <property type="entry name" value="PDZ_sf"/>
</dbReference>
<dbReference type="PANTHER" id="PTHR14191:SF6">
    <property type="entry name" value="NA(+)_H(+) EXCHANGE REGULATORY COFACTOR NHE-RF3-RELATED"/>
    <property type="match status" value="1"/>
</dbReference>
<dbReference type="PANTHER" id="PTHR14191">
    <property type="entry name" value="PDZ DOMAIN CONTAINING PROTEIN"/>
    <property type="match status" value="1"/>
</dbReference>
<dbReference type="Pfam" id="PF00595">
    <property type="entry name" value="PDZ"/>
    <property type="match status" value="4"/>
</dbReference>
<dbReference type="SMART" id="SM00228">
    <property type="entry name" value="PDZ"/>
    <property type="match status" value="4"/>
</dbReference>
<dbReference type="SUPFAM" id="SSF50156">
    <property type="entry name" value="PDZ domain-like"/>
    <property type="match status" value="4"/>
</dbReference>
<dbReference type="PROSITE" id="PS50106">
    <property type="entry name" value="PDZ"/>
    <property type="match status" value="4"/>
</dbReference>
<reference key="1">
    <citation type="journal article" date="1998" name="Lab. Invest.">
        <title>Identification and partial characterization of PDZK1: a novel protein containing PDZ interaction domains.</title>
        <authorList>
            <person name="Kocher O."/>
            <person name="Comella N."/>
            <person name="Tognazzi K."/>
            <person name="Brown L.F."/>
        </authorList>
    </citation>
    <scope>NUCLEOTIDE SEQUENCE [MRNA] (ISOFORM 1)</scope>
    <scope>TISSUE SPECIFICITY</scope>
    <scope>INTERACTION WITH PDZK1IP1</scope>
</reference>
<reference key="2">
    <citation type="journal article" date="2004" name="Nat. Genet.">
        <title>Complete sequencing and characterization of 21,243 full-length human cDNAs.</title>
        <authorList>
            <person name="Ota T."/>
            <person name="Suzuki Y."/>
            <person name="Nishikawa T."/>
            <person name="Otsuki T."/>
            <person name="Sugiyama T."/>
            <person name="Irie R."/>
            <person name="Wakamatsu A."/>
            <person name="Hayashi K."/>
            <person name="Sato H."/>
            <person name="Nagai K."/>
            <person name="Kimura K."/>
            <person name="Makita H."/>
            <person name="Sekine M."/>
            <person name="Obayashi M."/>
            <person name="Nishi T."/>
            <person name="Shibahara T."/>
            <person name="Tanaka T."/>
            <person name="Ishii S."/>
            <person name="Yamamoto J."/>
            <person name="Saito K."/>
            <person name="Kawai Y."/>
            <person name="Isono Y."/>
            <person name="Nakamura Y."/>
            <person name="Nagahari K."/>
            <person name="Murakami K."/>
            <person name="Yasuda T."/>
            <person name="Iwayanagi T."/>
            <person name="Wagatsuma M."/>
            <person name="Shiratori A."/>
            <person name="Sudo H."/>
            <person name="Hosoiri T."/>
            <person name="Kaku Y."/>
            <person name="Kodaira H."/>
            <person name="Kondo H."/>
            <person name="Sugawara M."/>
            <person name="Takahashi M."/>
            <person name="Kanda K."/>
            <person name="Yokoi T."/>
            <person name="Furuya T."/>
            <person name="Kikkawa E."/>
            <person name="Omura Y."/>
            <person name="Abe K."/>
            <person name="Kamihara K."/>
            <person name="Katsuta N."/>
            <person name="Sato K."/>
            <person name="Tanikawa M."/>
            <person name="Yamazaki M."/>
            <person name="Ninomiya K."/>
            <person name="Ishibashi T."/>
            <person name="Yamashita H."/>
            <person name="Murakawa K."/>
            <person name="Fujimori K."/>
            <person name="Tanai H."/>
            <person name="Kimata M."/>
            <person name="Watanabe M."/>
            <person name="Hiraoka S."/>
            <person name="Chiba Y."/>
            <person name="Ishida S."/>
            <person name="Ono Y."/>
            <person name="Takiguchi S."/>
            <person name="Watanabe S."/>
            <person name="Yosida M."/>
            <person name="Hotuta T."/>
            <person name="Kusano J."/>
            <person name="Kanehori K."/>
            <person name="Takahashi-Fujii A."/>
            <person name="Hara H."/>
            <person name="Tanase T.-O."/>
            <person name="Nomura Y."/>
            <person name="Togiya S."/>
            <person name="Komai F."/>
            <person name="Hara R."/>
            <person name="Takeuchi K."/>
            <person name="Arita M."/>
            <person name="Imose N."/>
            <person name="Musashino K."/>
            <person name="Yuuki H."/>
            <person name="Oshima A."/>
            <person name="Sasaki N."/>
            <person name="Aotsuka S."/>
            <person name="Yoshikawa Y."/>
            <person name="Matsunawa H."/>
            <person name="Ichihara T."/>
            <person name="Shiohata N."/>
            <person name="Sano S."/>
            <person name="Moriya S."/>
            <person name="Momiyama H."/>
            <person name="Satoh N."/>
            <person name="Takami S."/>
            <person name="Terashima Y."/>
            <person name="Suzuki O."/>
            <person name="Nakagawa S."/>
            <person name="Senoh A."/>
            <person name="Mizoguchi H."/>
            <person name="Goto Y."/>
            <person name="Shimizu F."/>
            <person name="Wakebe H."/>
            <person name="Hishigaki H."/>
            <person name="Watanabe T."/>
            <person name="Sugiyama A."/>
            <person name="Takemoto M."/>
            <person name="Kawakami B."/>
            <person name="Yamazaki M."/>
            <person name="Watanabe K."/>
            <person name="Kumagai A."/>
            <person name="Itakura S."/>
            <person name="Fukuzumi Y."/>
            <person name="Fujimori Y."/>
            <person name="Komiyama M."/>
            <person name="Tashiro H."/>
            <person name="Tanigami A."/>
            <person name="Fujiwara T."/>
            <person name="Ono T."/>
            <person name="Yamada K."/>
            <person name="Fujii Y."/>
            <person name="Ozaki K."/>
            <person name="Hirao M."/>
            <person name="Ohmori Y."/>
            <person name="Kawabata A."/>
            <person name="Hikiji T."/>
            <person name="Kobatake N."/>
            <person name="Inagaki H."/>
            <person name="Ikema Y."/>
            <person name="Okamoto S."/>
            <person name="Okitani R."/>
            <person name="Kawakami T."/>
            <person name="Noguchi S."/>
            <person name="Itoh T."/>
            <person name="Shigeta K."/>
            <person name="Senba T."/>
            <person name="Matsumura K."/>
            <person name="Nakajima Y."/>
            <person name="Mizuno T."/>
            <person name="Morinaga M."/>
            <person name="Sasaki M."/>
            <person name="Togashi T."/>
            <person name="Oyama M."/>
            <person name="Hata H."/>
            <person name="Watanabe M."/>
            <person name="Komatsu T."/>
            <person name="Mizushima-Sugano J."/>
            <person name="Satoh T."/>
            <person name="Shirai Y."/>
            <person name="Takahashi Y."/>
            <person name="Nakagawa K."/>
            <person name="Okumura K."/>
            <person name="Nagase T."/>
            <person name="Nomura N."/>
            <person name="Kikuchi H."/>
            <person name="Masuho Y."/>
            <person name="Yamashita R."/>
            <person name="Nakai K."/>
            <person name="Yada T."/>
            <person name="Nakamura Y."/>
            <person name="Ohara O."/>
            <person name="Isogai T."/>
            <person name="Sugano S."/>
        </authorList>
    </citation>
    <scope>NUCLEOTIDE SEQUENCE [LARGE SCALE MRNA] (ISOFORM 2)</scope>
    <source>
        <tissue>Kidney</tissue>
    </source>
</reference>
<reference key="3">
    <citation type="journal article" date="2006" name="Nature">
        <title>The DNA sequence and biological annotation of human chromosome 1.</title>
        <authorList>
            <person name="Gregory S.G."/>
            <person name="Barlow K.F."/>
            <person name="McLay K.E."/>
            <person name="Kaul R."/>
            <person name="Swarbreck D."/>
            <person name="Dunham A."/>
            <person name="Scott C.E."/>
            <person name="Howe K.L."/>
            <person name="Woodfine K."/>
            <person name="Spencer C.C.A."/>
            <person name="Jones M.C."/>
            <person name="Gillson C."/>
            <person name="Searle S."/>
            <person name="Zhou Y."/>
            <person name="Kokocinski F."/>
            <person name="McDonald L."/>
            <person name="Evans R."/>
            <person name="Phillips K."/>
            <person name="Atkinson A."/>
            <person name="Cooper R."/>
            <person name="Jones C."/>
            <person name="Hall R.E."/>
            <person name="Andrews T.D."/>
            <person name="Lloyd C."/>
            <person name="Ainscough R."/>
            <person name="Almeida J.P."/>
            <person name="Ambrose K.D."/>
            <person name="Anderson F."/>
            <person name="Andrew R.W."/>
            <person name="Ashwell R.I.S."/>
            <person name="Aubin K."/>
            <person name="Babbage A.K."/>
            <person name="Bagguley C.L."/>
            <person name="Bailey J."/>
            <person name="Beasley H."/>
            <person name="Bethel G."/>
            <person name="Bird C.P."/>
            <person name="Bray-Allen S."/>
            <person name="Brown J.Y."/>
            <person name="Brown A.J."/>
            <person name="Buckley D."/>
            <person name="Burton J."/>
            <person name="Bye J."/>
            <person name="Carder C."/>
            <person name="Chapman J.C."/>
            <person name="Clark S.Y."/>
            <person name="Clarke G."/>
            <person name="Clee C."/>
            <person name="Cobley V."/>
            <person name="Collier R.E."/>
            <person name="Corby N."/>
            <person name="Coville G.J."/>
            <person name="Davies J."/>
            <person name="Deadman R."/>
            <person name="Dunn M."/>
            <person name="Earthrowl M."/>
            <person name="Ellington A.G."/>
            <person name="Errington H."/>
            <person name="Frankish A."/>
            <person name="Frankland J."/>
            <person name="French L."/>
            <person name="Garner P."/>
            <person name="Garnett J."/>
            <person name="Gay L."/>
            <person name="Ghori M.R.J."/>
            <person name="Gibson R."/>
            <person name="Gilby L.M."/>
            <person name="Gillett W."/>
            <person name="Glithero R.J."/>
            <person name="Grafham D.V."/>
            <person name="Griffiths C."/>
            <person name="Griffiths-Jones S."/>
            <person name="Grocock R."/>
            <person name="Hammond S."/>
            <person name="Harrison E.S.I."/>
            <person name="Hart E."/>
            <person name="Haugen E."/>
            <person name="Heath P.D."/>
            <person name="Holmes S."/>
            <person name="Holt K."/>
            <person name="Howden P.J."/>
            <person name="Hunt A.R."/>
            <person name="Hunt S.E."/>
            <person name="Hunter G."/>
            <person name="Isherwood J."/>
            <person name="James R."/>
            <person name="Johnson C."/>
            <person name="Johnson D."/>
            <person name="Joy A."/>
            <person name="Kay M."/>
            <person name="Kershaw J.K."/>
            <person name="Kibukawa M."/>
            <person name="Kimberley A.M."/>
            <person name="King A."/>
            <person name="Knights A.J."/>
            <person name="Lad H."/>
            <person name="Laird G."/>
            <person name="Lawlor S."/>
            <person name="Leongamornlert D.A."/>
            <person name="Lloyd D.M."/>
            <person name="Loveland J."/>
            <person name="Lovell J."/>
            <person name="Lush M.J."/>
            <person name="Lyne R."/>
            <person name="Martin S."/>
            <person name="Mashreghi-Mohammadi M."/>
            <person name="Matthews L."/>
            <person name="Matthews N.S.W."/>
            <person name="McLaren S."/>
            <person name="Milne S."/>
            <person name="Mistry S."/>
            <person name="Moore M.J.F."/>
            <person name="Nickerson T."/>
            <person name="O'Dell C.N."/>
            <person name="Oliver K."/>
            <person name="Palmeiri A."/>
            <person name="Palmer S.A."/>
            <person name="Parker A."/>
            <person name="Patel D."/>
            <person name="Pearce A.V."/>
            <person name="Peck A.I."/>
            <person name="Pelan S."/>
            <person name="Phelps K."/>
            <person name="Phillimore B.J."/>
            <person name="Plumb R."/>
            <person name="Rajan J."/>
            <person name="Raymond C."/>
            <person name="Rouse G."/>
            <person name="Saenphimmachak C."/>
            <person name="Sehra H.K."/>
            <person name="Sheridan E."/>
            <person name="Shownkeen R."/>
            <person name="Sims S."/>
            <person name="Skuce C.D."/>
            <person name="Smith M."/>
            <person name="Steward C."/>
            <person name="Subramanian S."/>
            <person name="Sycamore N."/>
            <person name="Tracey A."/>
            <person name="Tromans A."/>
            <person name="Van Helmond Z."/>
            <person name="Wall M."/>
            <person name="Wallis J.M."/>
            <person name="White S."/>
            <person name="Whitehead S.L."/>
            <person name="Wilkinson J.E."/>
            <person name="Willey D.L."/>
            <person name="Williams H."/>
            <person name="Wilming L."/>
            <person name="Wray P.W."/>
            <person name="Wu Z."/>
            <person name="Coulson A."/>
            <person name="Vaudin M."/>
            <person name="Sulston J.E."/>
            <person name="Durbin R.M."/>
            <person name="Hubbard T."/>
            <person name="Wooster R."/>
            <person name="Dunham I."/>
            <person name="Carter N.P."/>
            <person name="McVean G."/>
            <person name="Ross M.T."/>
            <person name="Harrow J."/>
            <person name="Olson M.V."/>
            <person name="Beck S."/>
            <person name="Rogers J."/>
            <person name="Bentley D.R."/>
        </authorList>
    </citation>
    <scope>NUCLEOTIDE SEQUENCE [LARGE SCALE GENOMIC DNA]</scope>
</reference>
<reference key="4">
    <citation type="journal article" date="2004" name="Genome Res.">
        <title>The status, quality, and expansion of the NIH full-length cDNA project: the Mammalian Gene Collection (MGC).</title>
        <authorList>
            <consortium name="The MGC Project Team"/>
        </authorList>
    </citation>
    <scope>NUCLEOTIDE SEQUENCE [LARGE SCALE MRNA] (ISOFORM 1)</scope>
    <source>
        <tissue>Colon</tissue>
    </source>
</reference>
<reference key="5">
    <citation type="journal article" date="1999" name="Lab. Invest.">
        <title>PDZK1, a novel PDZ domain-containing protein up-regulated in carcinomas and mapped to chromosome 1q21, interacts with cMOAT (MRP2), the multidrug resistance-associated protein.</title>
        <authorList>
            <person name="Kocher O."/>
            <person name="Comella N."/>
            <person name="Gilchrist A."/>
            <person name="Pal R."/>
            <person name="Tognazzi K."/>
            <person name="Brown L.F."/>
            <person name="Knoll J.H."/>
        </authorList>
    </citation>
    <scope>TISSUE SPECIFICITY</scope>
    <scope>INTERACTION WITH ABCC2</scope>
</reference>
<reference key="6">
    <citation type="journal article" date="2000" name="Cell">
        <title>Accessory protein facilitated CFTR-CFTR interaction, a molecular mechanism to potentiate the chloride channel activity.</title>
        <authorList>
            <person name="Wang S."/>
            <person name="Yue H."/>
            <person name="Derin R.B."/>
            <person name="Guggino W.B."/>
            <person name="Li M."/>
        </authorList>
    </citation>
    <scope>TISSUE SPECIFICITY</scope>
</reference>
<reference key="7">
    <citation type="journal article" date="2004" name="J. Cell Sci.">
        <title>Bcr (breakpoint cluster region) protein binds to PDZ-domains of scaffold protein PDZK1 and vesicle coat protein Mint3.</title>
        <authorList>
            <person name="Malmberg E.K."/>
            <person name="Andersson C.X."/>
            <person name="Gentzsch M."/>
            <person name="Chen J.H."/>
            <person name="Mengos A."/>
            <person name="Cui L."/>
            <person name="Hansson G.C."/>
            <person name="Riordan J.R."/>
        </authorList>
    </citation>
    <scope>INTERACTION WITH BCR</scope>
</reference>
<reference key="8">
    <citation type="journal article" date="2005" name="Biochemistry">
        <title>The CFTR associated protein CAP70 interacts with the apical Cl-/HCO3-exchanger DRA in rabbit small intestinal mucosa.</title>
        <authorList>
            <person name="Rossmann H."/>
            <person name="Jacob P."/>
            <person name="Baisch S."/>
            <person name="Hassoun R."/>
            <person name="Meier J."/>
            <person name="Natour D."/>
            <person name="Yahya K."/>
            <person name="Yun C."/>
            <person name="Biber J."/>
            <person name="Lackner K.J."/>
            <person name="Fiehn W."/>
            <person name="Gregor M."/>
            <person name="Seidler U."/>
            <person name="Lamprecht G."/>
        </authorList>
    </citation>
    <scope>INTERACTION WITH SLC26A3</scope>
</reference>
<reference key="9">
    <citation type="journal article" date="2005" name="Proc. Natl. Acad. Sci. U.S.A.">
        <title>Role of PDZK1 in membrane expression of renal brush border ion exchangers.</title>
        <authorList>
            <person name="Thomson R.B."/>
            <person name="Wang T."/>
            <person name="Thomson B.R."/>
            <person name="Tarrats L."/>
            <person name="Girardi A."/>
            <person name="Mentone S."/>
            <person name="Soleimani M."/>
            <person name="Kocher O."/>
            <person name="Aronson P.S."/>
        </authorList>
    </citation>
    <scope>INTERACTION WITH SLC9A3</scope>
</reference>
<reference key="10">
    <citation type="journal article" date="2014" name="J. Proteomics">
        <title>An enzyme assisted RP-RPLC approach for in-depth analysis of human liver phosphoproteome.</title>
        <authorList>
            <person name="Bian Y."/>
            <person name="Song C."/>
            <person name="Cheng K."/>
            <person name="Dong M."/>
            <person name="Wang F."/>
            <person name="Huang J."/>
            <person name="Sun D."/>
            <person name="Wang L."/>
            <person name="Ye M."/>
            <person name="Zou H."/>
        </authorList>
    </citation>
    <scope>PHOSPHORYLATION [LARGE SCALE ANALYSIS] AT SER-148</scope>
    <scope>IDENTIFICATION BY MASS SPECTROMETRY [LARGE SCALE ANALYSIS]</scope>
    <source>
        <tissue>Liver</tissue>
    </source>
</reference>
<reference key="11">
    <citation type="journal article" date="2019" name="J. Physiol. Sci.">
        <title>Identification of the multivalent PDZ protein PDZK1 as a binding partner of sodium-coupled monocarboxylate transporter SMCT1 (SLC5A8) and SMCT2 (SLC5A12).</title>
        <authorList>
            <person name="Srivastava S."/>
            <person name="Nakagawa K."/>
            <person name="He X."/>
            <person name="Kimura T."/>
            <person name="Fukutomi T."/>
            <person name="Miyauchi S."/>
            <person name="Sakurai H."/>
            <person name="Anzai N."/>
        </authorList>
    </citation>
    <scope>INTERACTION WITH SLC5A8</scope>
</reference>
<reference key="12">
    <citation type="submission" date="2008-02" db="PDB data bank">
        <title>Solution structure of PDZ domains of PDZ domain containing protein 1.</title>
        <authorList>
            <consortium name="RIKEN structural genomics initiative (RSGI)"/>
        </authorList>
    </citation>
    <scope>STRUCTURE BY NMR OF 132-224 AND 376-458</scope>
</reference>
<evidence type="ECO:0000250" key="1"/>
<evidence type="ECO:0000250" key="2">
    <source>
        <dbReference type="UniProtKB" id="Q9JIL4"/>
    </source>
</evidence>
<evidence type="ECO:0000250" key="3">
    <source>
        <dbReference type="UniProtKB" id="Q9JJ40"/>
    </source>
</evidence>
<evidence type="ECO:0000255" key="4">
    <source>
        <dbReference type="PROSITE-ProRule" id="PRU00143"/>
    </source>
</evidence>
<evidence type="ECO:0000256" key="5">
    <source>
        <dbReference type="SAM" id="MobiDB-lite"/>
    </source>
</evidence>
<evidence type="ECO:0000269" key="6">
    <source>
    </source>
</evidence>
<evidence type="ECO:0000269" key="7">
    <source>
    </source>
</evidence>
<evidence type="ECO:0000269" key="8">
    <source>
    </source>
</evidence>
<evidence type="ECO:0000269" key="9">
    <source>
    </source>
</evidence>
<evidence type="ECO:0000269" key="10">
    <source>
    </source>
</evidence>
<evidence type="ECO:0000269" key="11">
    <source>
    </source>
</evidence>
<evidence type="ECO:0000269" key="12">
    <source>
    </source>
</evidence>
<evidence type="ECO:0000303" key="13">
    <source>
    </source>
</evidence>
<evidence type="ECO:0000305" key="14"/>
<evidence type="ECO:0007744" key="15">
    <source>
    </source>
</evidence>
<evidence type="ECO:0007829" key="16">
    <source>
        <dbReference type="PDB" id="2EEI"/>
    </source>
</evidence>
<evidence type="ECO:0007829" key="17">
    <source>
        <dbReference type="PDB" id="2EEJ"/>
    </source>
</evidence>
<evidence type="ECO:0007829" key="18">
    <source>
        <dbReference type="PDB" id="4Q2P"/>
    </source>
</evidence>
<evidence type="ECO:0007829" key="19">
    <source>
        <dbReference type="PDB" id="6EZI"/>
    </source>
</evidence>
<organism>
    <name type="scientific">Homo sapiens</name>
    <name type="common">Human</name>
    <dbReference type="NCBI Taxonomy" id="9606"/>
    <lineage>
        <taxon>Eukaryota</taxon>
        <taxon>Metazoa</taxon>
        <taxon>Chordata</taxon>
        <taxon>Craniata</taxon>
        <taxon>Vertebrata</taxon>
        <taxon>Euteleostomi</taxon>
        <taxon>Mammalia</taxon>
        <taxon>Eutheria</taxon>
        <taxon>Euarchontoglires</taxon>
        <taxon>Primates</taxon>
        <taxon>Haplorrhini</taxon>
        <taxon>Catarrhini</taxon>
        <taxon>Hominidae</taxon>
        <taxon>Homo</taxon>
    </lineage>
</organism>
<comment type="function">
    <text evidence="1">A scaffold protein that connects plasma membrane proteins and regulatory components, regulating their surface expression in epithelial cells apical domains. May be involved in the coordination of a diverse range of regulatory processes for ion transport and second messenger cascades. In complex with NHERF1, may cluster proteins that are functionally dependent in a mutual fashion and modulate the trafficking and the activity of the associated membrane proteins. May play a role in the cellular mechanisms associated with multidrug resistance through its interaction with ABCC2 and PDZK1IP1. May potentiate the CFTR chloride channel activity. Required for normal cell-surface expression of SCARB1. Plays a role in maintaining normal plasma cholesterol levels via its effects on SCARB1. Plays a role in the normal localization and function of the chloride-anion exchanger SLC26A6 to the plasma membrane in the brush border of the proximal tubule of the kidney. May be involved in the regulation of proximal tubular Na(+)-dependent inorganic phosphate cotransport therefore playing an important role in tubule function (By similarity).</text>
</comment>
<comment type="subunit">
    <text evidence="2 6 8 9 10 11 12">Interacts with PDZK1IP1 and ABCC2. Interacts (via PDZ domains 1 and 3) with SCARB1 (C-terminal domain). Forms a heterodimeric complex with NHERF1. Interacts with AKAP2, BCR, CFTR, SLC22A12, SLC22A4, SLC22A5, NHERF2 and SLC17A1. Component of a complex, composed of PDZK1, SYNGAP1, KLHL17 and NMDA receptors. Interacts (via PDZ1 domain) directly with KLHL17; the interaction is important for integrity of actin cytoskeleton structures in neurons. Interacts (via the first PDZ domain) with PTGIR (via non-isoprenylated C-terminus) (By similarity). Interacts (via C-terminal PDZ domain) with SLC26A6 (via C-terminal domain) (By similarity). Interacts (via C-terminal PDZ domain) with SLC9A3 (via C-terminal domain). Interacts (via PDZ domains 1 and 3) with SLC5A8 (via PDZ-binding motif); interaction increases nicotinate transport activity of SLC5A8 (PubMed:30604288).</text>
</comment>
<comment type="interaction">
    <interactant intactId="EBI-349819">
        <id>Q5T2W1</id>
    </interactant>
    <interactant intactId="EBI-7730807">
        <id>Q9BYF1</id>
        <label>ACE2</label>
    </interactant>
    <organismsDiffer>false</organismsDiffer>
    <experiments>3</experiments>
</comment>
<comment type="interaction">
    <interactant intactId="EBI-349819">
        <id>Q5T2W1</id>
    </interactant>
    <interactant intactId="EBI-349854">
        <id>P13569</id>
        <label>CFTR</label>
    </interactant>
    <organismsDiffer>false</organismsDiffer>
    <experiments>3</experiments>
</comment>
<comment type="interaction">
    <interactant intactId="EBI-349819">
        <id>Q5T2W1</id>
    </interactant>
    <interactant intactId="EBI-25495635">
        <id>P51790-2</id>
        <label>CLCN3</label>
    </interactant>
    <organismsDiffer>false</organismsDiffer>
    <experiments>2</experiments>
</comment>
<comment type="interaction">
    <interactant intactId="EBI-349819">
        <id>Q5T2W1</id>
    </interactant>
    <interactant intactId="EBI-744302">
        <id>P14136</id>
        <label>GFAP</label>
    </interactant>
    <organismsDiffer>false</organismsDiffer>
    <experiments>4</experiments>
</comment>
<comment type="interaction">
    <interactant intactId="EBI-349819">
        <id>Q5T2W1</id>
    </interactant>
    <interactant intactId="EBI-713665">
        <id>P19404</id>
        <label>NDUFV2</label>
    </interactant>
    <organismsDiffer>false</organismsDiffer>
    <experiments>3</experiments>
</comment>
<comment type="interaction">
    <interactant intactId="EBI-349819">
        <id>Q5T2W1</id>
    </interactant>
    <interactant intactId="EBI-1391623">
        <id>P29474</id>
        <label>NOS3</label>
    </interactant>
    <organismsDiffer>false</organismsDiffer>
    <experiments>3</experiments>
</comment>
<comment type="subcellular location">
    <subcellularLocation>
        <location evidence="3">Membrane</location>
        <topology evidence="3">Peripheral membrane protein</topology>
    </subcellularLocation>
    <subcellularLocation>
        <location evidence="2">Cell membrane</location>
    </subcellularLocation>
    <text evidence="3">Associated with peripheral membranes. Localizes to the apical compartment of proximal tubular cells and to sinusoidal liver membranes.</text>
</comment>
<comment type="alternative products">
    <event type="alternative splicing"/>
    <isoform>
        <id>Q5T2W1-1</id>
        <name>1</name>
        <sequence type="displayed"/>
    </isoform>
    <isoform>
        <id>Q5T2W1-2</id>
        <name>2</name>
        <sequence type="described" ref="VSP_044637"/>
    </isoform>
</comment>
<comment type="tissue specificity">
    <text evidence="6 7 12">Expression is limited to epithelial cells. Expressed in the kidney (brush border of proximal tubule), pancreas, liver, and small intestine. Expressed at a lower level in the adrenal cortex, testis and stomach. Overexpressed in breast, renal and lung carcinomas.</text>
</comment>
<comment type="domain">
    <text evidence="1">The PDZ 2 and 3 domains seem to be involved in the interaction with SLC26A3.</text>
</comment>
<comment type="domain">
    <text evidence="1">Interaction with the C-terminus of CFTR could be mediated through independent binding of PDZ 1, 3 and 4 domains.</text>
</comment>
<comment type="domain">
    <text evidence="1">The PDZ 1 and 3 domains seem to be involved in the interaction with SLCO1A1.</text>
</comment>
<comment type="domain">
    <text>The PDZ 1 domain interacts with BCR.</text>
</comment>
<comment type="domain">
    <text evidence="1">The PDZ 2 and 4 domains do not interact with the C-terminal region of SCARB1.</text>
</comment>
<comment type="similarity">
    <text evidence="14">Belongs to the NHER family.</text>
</comment>
<feature type="chain" id="PRO_0000058287" description="Na(+)/H(+) exchange regulatory cofactor NHE-RF3">
    <location>
        <begin position="1"/>
        <end position="519"/>
    </location>
</feature>
<feature type="domain" description="PDZ 1" evidence="4">
    <location>
        <begin position="9"/>
        <end position="90"/>
    </location>
</feature>
<feature type="domain" description="PDZ 2" evidence="4">
    <location>
        <begin position="134"/>
        <end position="215"/>
    </location>
</feature>
<feature type="domain" description="PDZ 3" evidence="4">
    <location>
        <begin position="243"/>
        <end position="323"/>
    </location>
</feature>
<feature type="domain" description="PDZ 4" evidence="4">
    <location>
        <begin position="378"/>
        <end position="458"/>
    </location>
</feature>
<feature type="region of interest" description="Disordered" evidence="5">
    <location>
        <begin position="347"/>
        <end position="374"/>
    </location>
</feature>
<feature type="region of interest" description="Disordered" evidence="5">
    <location>
        <begin position="479"/>
        <end position="519"/>
    </location>
</feature>
<feature type="compositionally biased region" description="Polar residues" evidence="5">
    <location>
        <begin position="357"/>
        <end position="367"/>
    </location>
</feature>
<feature type="compositionally biased region" description="Basic and acidic residues" evidence="5">
    <location>
        <begin position="482"/>
        <end position="504"/>
    </location>
</feature>
<feature type="compositionally biased region" description="Low complexity" evidence="5">
    <location>
        <begin position="505"/>
        <end position="519"/>
    </location>
</feature>
<feature type="modified residue" description="Phosphoserine" evidence="3">
    <location>
        <position position="108"/>
    </location>
</feature>
<feature type="modified residue" description="Phosphoserine" evidence="15">
    <location>
        <position position="148"/>
    </location>
</feature>
<feature type="modified residue" description="Phosphoserine" evidence="2">
    <location>
        <position position="192"/>
    </location>
</feature>
<feature type="modified residue" description="Phosphoserine" evidence="2">
    <location>
        <position position="250"/>
    </location>
</feature>
<feature type="modified residue" description="Phosphoserine" evidence="2">
    <location>
        <position position="334"/>
    </location>
</feature>
<feature type="modified residue" description="Phosphoserine" evidence="2">
    <location>
        <position position="348"/>
    </location>
</feature>
<feature type="modified residue" description="Phosphothreonine" evidence="2">
    <location>
        <position position="451"/>
    </location>
</feature>
<feature type="modified residue" description="Phosphoserine" evidence="2">
    <location>
        <position position="492"/>
    </location>
</feature>
<feature type="modified residue" description="Phosphoserine" evidence="2">
    <location>
        <position position="508"/>
    </location>
</feature>
<feature type="modified residue" description="Phosphoserine" evidence="2">
    <location>
        <position position="510"/>
    </location>
</feature>
<feature type="modified residue" description="Phosphoserine" evidence="2">
    <location>
        <position position="511"/>
    </location>
</feature>
<feature type="modified residue" description="Phosphoserine" evidence="2">
    <location>
        <position position="512"/>
    </location>
</feature>
<feature type="modified residue" description="Phosphoserine" evidence="2">
    <location>
        <position position="514"/>
    </location>
</feature>
<feature type="splice variant" id="VSP_044637" description="In isoform 2." evidence="13">
    <location>
        <begin position="154"/>
        <end position="264"/>
    </location>
</feature>
<feature type="sequence conflict" description="In Ref. 1; AAC12264." evidence="14" ref="1">
    <original>E</original>
    <variation>K</variation>
    <location>
        <position position="195"/>
    </location>
</feature>
<feature type="sequence conflict" description="In Ref. 2; BAG60531." evidence="14" ref="2">
    <original>D</original>
    <variation>G</variation>
    <location>
        <position position="270"/>
    </location>
</feature>
<feature type="strand" evidence="18">
    <location>
        <begin position="134"/>
        <end position="139"/>
    </location>
</feature>
<feature type="strand" evidence="16">
    <location>
        <begin position="142"/>
        <end position="144"/>
    </location>
</feature>
<feature type="strand" evidence="18">
    <location>
        <begin position="148"/>
        <end position="150"/>
    </location>
</feature>
<feature type="strand" evidence="18">
    <location>
        <begin position="159"/>
        <end position="161"/>
    </location>
</feature>
<feature type="helix" evidence="18">
    <location>
        <begin position="168"/>
        <end position="172"/>
    </location>
</feature>
<feature type="strand" evidence="18">
    <location>
        <begin position="179"/>
        <end position="183"/>
    </location>
</feature>
<feature type="helix" evidence="18">
    <location>
        <begin position="193"/>
        <end position="202"/>
    </location>
</feature>
<feature type="turn" evidence="18">
    <location>
        <begin position="203"/>
        <end position="205"/>
    </location>
</feature>
<feature type="strand" evidence="18">
    <location>
        <begin position="206"/>
        <end position="212"/>
    </location>
</feature>
<feature type="turn" evidence="16">
    <location>
        <begin position="214"/>
        <end position="216"/>
    </location>
</feature>
<feature type="strand" evidence="19">
    <location>
        <begin position="375"/>
        <end position="382"/>
    </location>
</feature>
<feature type="strand" evidence="17">
    <location>
        <begin position="385"/>
        <end position="387"/>
    </location>
</feature>
<feature type="strand" evidence="19">
    <location>
        <begin position="391"/>
        <end position="395"/>
    </location>
</feature>
<feature type="strand" evidence="19">
    <location>
        <begin position="402"/>
        <end position="404"/>
    </location>
</feature>
<feature type="helix" evidence="19">
    <location>
        <begin position="411"/>
        <end position="415"/>
    </location>
</feature>
<feature type="strand" evidence="19">
    <location>
        <begin position="422"/>
        <end position="426"/>
    </location>
</feature>
<feature type="strand" evidence="17">
    <location>
        <begin position="432"/>
        <end position="434"/>
    </location>
</feature>
<feature type="helix" evidence="19">
    <location>
        <begin position="436"/>
        <end position="444"/>
    </location>
</feature>
<feature type="strand" evidence="19">
    <location>
        <begin position="448"/>
        <end position="455"/>
    </location>
</feature>
<keyword id="KW-0002">3D-structure</keyword>
<keyword id="KW-0025">Alternative splicing</keyword>
<keyword id="KW-1003">Cell membrane</keyword>
<keyword id="KW-0472">Membrane</keyword>
<keyword id="KW-0597">Phosphoprotein</keyword>
<keyword id="KW-1267">Proteomics identification</keyword>
<keyword id="KW-1185">Reference proteome</keyword>
<keyword id="KW-0677">Repeat</keyword>
<accession>Q5T2W1</accession>
<accession>B4DPB9</accession>
<accession>E7EU02</accession>
<accession>O60450</accession>
<accession>Q5T5P6</accession>
<accession>Q9BQ41</accession>